<proteinExistence type="inferred from homology"/>
<accession>A5VSR0</accession>
<keyword id="KW-0997">Cell inner membrane</keyword>
<keyword id="KW-1003">Cell membrane</keyword>
<keyword id="KW-0472">Membrane</keyword>
<keyword id="KW-0812">Transmembrane</keyword>
<keyword id="KW-1133">Transmembrane helix</keyword>
<gene>
    <name evidence="1" type="primary">yciB</name>
    <name type="ordered locus">BOV_1862</name>
</gene>
<reference key="1">
    <citation type="journal article" date="2009" name="PLoS ONE">
        <title>Genome degradation in Brucella ovis corresponds with narrowing of its host range and tissue tropism.</title>
        <authorList>
            <person name="Tsolis R.M."/>
            <person name="Seshadri R."/>
            <person name="Santos R.L."/>
            <person name="Sangari F.J."/>
            <person name="Lobo J.M."/>
            <person name="de Jong M.F."/>
            <person name="Ren Q."/>
            <person name="Myers G."/>
            <person name="Brinkac L.M."/>
            <person name="Nelson W.C."/>
            <person name="Deboy R.T."/>
            <person name="Angiuoli S."/>
            <person name="Khouri H."/>
            <person name="Dimitrov G."/>
            <person name="Robinson J.R."/>
            <person name="Mulligan S."/>
            <person name="Walker R.L."/>
            <person name="Elzer P.E."/>
            <person name="Hassan K.A."/>
            <person name="Paulsen I.T."/>
        </authorList>
    </citation>
    <scope>NUCLEOTIDE SEQUENCE [LARGE SCALE GENOMIC DNA]</scope>
    <source>
        <strain>ATCC 25840 / 63/290 / NCTC 10512</strain>
    </source>
</reference>
<comment type="function">
    <text evidence="1">Plays a role in cell envelope biogenesis, maintenance of cell envelope integrity and membrane homeostasis.</text>
</comment>
<comment type="subcellular location">
    <subcellularLocation>
        <location evidence="1">Cell inner membrane</location>
        <topology evidence="1">Multi-pass membrane protein</topology>
    </subcellularLocation>
</comment>
<comment type="similarity">
    <text evidence="1">Belongs to the YciB family.</text>
</comment>
<dbReference type="EMBL" id="CP000708">
    <property type="protein sequence ID" value="ABQ60250.1"/>
    <property type="molecule type" value="Genomic_DNA"/>
</dbReference>
<dbReference type="RefSeq" id="WP_002965003.1">
    <property type="nucleotide sequence ID" value="NC_009505.1"/>
</dbReference>
<dbReference type="SMR" id="A5VSR0"/>
<dbReference type="KEGG" id="bov:BOV_1862"/>
<dbReference type="HOGENOM" id="CLU_089554_1_1_5"/>
<dbReference type="PhylomeDB" id="A5VSR0"/>
<dbReference type="Proteomes" id="UP000006383">
    <property type="component" value="Chromosome I"/>
</dbReference>
<dbReference type="GO" id="GO:0005886">
    <property type="term" value="C:plasma membrane"/>
    <property type="evidence" value="ECO:0007669"/>
    <property type="project" value="UniProtKB-SubCell"/>
</dbReference>
<dbReference type="HAMAP" id="MF_00189">
    <property type="entry name" value="YciB"/>
    <property type="match status" value="1"/>
</dbReference>
<dbReference type="InterPro" id="IPR006008">
    <property type="entry name" value="YciB"/>
</dbReference>
<dbReference type="NCBIfam" id="TIGR00997">
    <property type="entry name" value="ispZ"/>
    <property type="match status" value="1"/>
</dbReference>
<dbReference type="NCBIfam" id="NF001323">
    <property type="entry name" value="PRK00259.1-1"/>
    <property type="match status" value="1"/>
</dbReference>
<dbReference type="PANTHER" id="PTHR36917:SF1">
    <property type="entry name" value="INNER MEMBRANE-SPANNING PROTEIN YCIB"/>
    <property type="match status" value="1"/>
</dbReference>
<dbReference type="PANTHER" id="PTHR36917">
    <property type="entry name" value="INTRACELLULAR SEPTATION PROTEIN A-RELATED"/>
    <property type="match status" value="1"/>
</dbReference>
<dbReference type="Pfam" id="PF04279">
    <property type="entry name" value="IspA"/>
    <property type="match status" value="1"/>
</dbReference>
<organism>
    <name type="scientific">Brucella ovis (strain ATCC 25840 / 63/290 / NCTC 10512)</name>
    <dbReference type="NCBI Taxonomy" id="444178"/>
    <lineage>
        <taxon>Bacteria</taxon>
        <taxon>Pseudomonadati</taxon>
        <taxon>Pseudomonadota</taxon>
        <taxon>Alphaproteobacteria</taxon>
        <taxon>Hyphomicrobiales</taxon>
        <taxon>Brucellaceae</taxon>
        <taxon>Brucella/Ochrobactrum group</taxon>
        <taxon>Brucella</taxon>
    </lineage>
</organism>
<feature type="chain" id="PRO_1000020988" description="Inner membrane-spanning protein YciB">
    <location>
        <begin position="1"/>
        <end position="220"/>
    </location>
</feature>
<feature type="transmembrane region" description="Helical" evidence="1">
    <location>
        <begin position="20"/>
        <end position="40"/>
    </location>
</feature>
<feature type="transmembrane region" description="Helical" evidence="1">
    <location>
        <begin position="57"/>
        <end position="77"/>
    </location>
</feature>
<feature type="transmembrane region" description="Helical" evidence="1">
    <location>
        <begin position="86"/>
        <end position="106"/>
    </location>
</feature>
<feature type="transmembrane region" description="Helical" evidence="1">
    <location>
        <begin position="123"/>
        <end position="143"/>
    </location>
</feature>
<feature type="transmembrane region" description="Helical" evidence="1">
    <location>
        <begin position="156"/>
        <end position="176"/>
    </location>
</feature>
<feature type="transmembrane region" description="Helical" evidence="1">
    <location>
        <begin position="187"/>
        <end position="207"/>
    </location>
</feature>
<sequence length="220" mass="24794">MEHPVFERDPSEKSETERREVPPLLKLALELGPLLVFFFANARGEMLIERFPILGSIGAPIFLATALFMAATVIALAISWSMTRTLPIMPLVSGIVVLVFGALTLWLHNDTFIKMKPTIVNTLFGGILLGGLFFGKSLLGYVFDSAFRLDAEGWRKLTLRWGLFFIFLAIVNEIVWRNFSTDTWVSFKVWGIMPITIVFTLLQMPLIQKHSLTDEENTAS</sequence>
<name>YCIB_BRUO2</name>
<protein>
    <recommendedName>
        <fullName evidence="1">Inner membrane-spanning protein YciB</fullName>
    </recommendedName>
</protein>
<evidence type="ECO:0000255" key="1">
    <source>
        <dbReference type="HAMAP-Rule" id="MF_00189"/>
    </source>
</evidence>